<accession>Q13439</accession>
<accession>F8W8Q7</accession>
<accession>Q13270</accession>
<accession>Q13654</accession>
<accession>Q14436</accession>
<accession>Q59EW8</accession>
<keyword id="KW-0002">3D-structure</keyword>
<keyword id="KW-0025">Alternative splicing</keyword>
<keyword id="KW-0175">Coiled coil</keyword>
<keyword id="KW-0963">Cytoplasm</keyword>
<keyword id="KW-0325">Glycoprotein</keyword>
<keyword id="KW-0333">Golgi apparatus</keyword>
<keyword id="KW-0472">Membrane</keyword>
<keyword id="KW-0597">Phosphoprotein</keyword>
<keyword id="KW-1267">Proteomics identification</keyword>
<keyword id="KW-1185">Reference proteome</keyword>
<name>GOGA4_HUMAN</name>
<sequence length="2230" mass="261140">MFKKLKQKISEEQQQLQQALAPAQASSNSSTPTRMRSRTSSFTEQLDEGTPNRESGDTQSFAQKLQLRVPSVESLFRSPIKESLFRSSSKESLVRTSSRESLNRLDLDSSTASFDPPSDMDSEAEDLVGNSDSLNKEQLIQRLRRMERSLSSYRGKYSELVTAYQMLQREKKKLQGILSQSQDKSLRRIAELREELQMDQQAKKHLQEEFDASLEEKDQYISVLQTQVSLLKQRLRNGPMNVDVLKPLPQLEPQAEVFTKEENPESDGEPVVEDGTSVKTLETLQQRVKRQENLLKRCKETIQSHKEQCTLLTSEKEALQEQLDERLQELEKIKDLHMAEKTKLITQLRDAKNLIEQLEQDKGMVIAETKRQMHETLEMKEEEIAQLRSRIKQMTTQGEELREQKEKSERAAFEELEKALSTAQKTEEARRKLKAEMDEQIKTIEKTSEEERISLQQELSRVKQEVVDVMKKSSEEQIAKLQKLHEKELARKEQELTKKLQTREREFQEQMKVALEKSQSEYLKISQEKEQQESLALEELELQKKAILTESENKLRDLQQEAETYRTRILELESSLEKSLQENKNQSKDLAVHLEAEKNKHNKEITVMVEKHKTELESLKHQQDALWTEKLQVLKQQYQTEMEKLREKCEQEKETLLKDKEIIFQAHIEEMNEKTLEKLDVKQTELESLSSELSEVLKARHKLEEELSVLKDQTDKMKQELEAKMDEQKNHHQQQVDSIIKEHEVSIQRTEKALKDQINQLELLLKERDKHLKEHQAHVENLEADIKRSEGELQQASAKLDVFQSYQSATHEQTKAYEEQLAQLQQKLLDLETERILLTKQVAEVEAQKKDVCTELDAHKIQVQDLMQQLEKQNSEMEQKVKSLTQVYESKLEDGNKEQEQTKQILVEKENMILQMREGQKKEIEILTQKLSAKEDSIHILNEEYETKFKNQEKKMEKVKQKAKEMQETLKKKLLDQEAKLKKELENTALELSQKEKQFNAKMLEMAQANSAGISDAVSRLETNQKEQIESLTEVHRRELNDVISIWEKKLNQQAEELQEIHEIQLQEKEQEVAELKQKILLFGCEKEEMNKEITWLKEEGVKQDTTLNELQEQLKQKSAHVNSLAQDETKLKAHLEKLEVDLNKSLKENTFLQEQLVELKMLAEEDKRKVSELTSKLKTTDEEFQSLKSSHEKSNKSLEDKSLEFKKLSEELAIQLDICCKKTEALLEAKTNELINISSSKTNAILSRISHCQHRTTKVKEALLIKTCTVSELEAQLRQLTEEQNTLNISFQQATHQLEEKENQIKSMKADIESLVTEKEALQKEGGNQQQAASEKESCITQLKKELSENINAVTLMKEELKEKKVEISSLSKQLTDLNVQLQNSISLSEKEAAISSLRKQYDEEKCELLDQVQDLSFKVDTLSKEKISALEQVDDWSNKFSEWKKKAQSRFTQHQNTVKELQIQLELKSKEAYEKDEQINLLKEELDQQNKRFDCLKGEMEDDKSKMEKKESNLETELKSQTARIMELEDHITQKTIEIESLNEVLKNYNQQKDIEHKELVQKLQHFQELGEEKDNRVKEAEEKILTLENQVYSMKAELETKKKELEHVNLSVKSKEEELKALEDRLESESAAKLAELKRKAEQKIAAIKKQLLSQMEEKEEQYKKGTESHLSELNTKLQEREREVHILEEKLKSVESSQSETLIVPRSAKNVAAYTEQEEADSQGCVQKTYEEKISVLQRNLTEKEKLLQRVGQEKEETVSSHFEMRCQYQERLIKLEHAEAKQHEDQSMIGHLQEELEEKNKKYSLIVAQHVEKEGGKNNIQAKQNLENVFDDVQKTLQEKELTCQILEQKIKELDSCLVRQKEVHRVEMEELTSKYEKLQALQQMDGRNKPTELLEENTEEKSKSHLVQPKLLSNMEAQHNDLEFKLAGAEREKQKLGKEIVRLQKDLRMLRKEHQQELEILKKEYDQEREEKIKQEQEDLELKHNSTLKQLMREFNTQLAQKEQELEMTIKETINKAQEVEAELLESHQEETNQLLKKIAEKDDDLKRTAKRYEEILDAREEEMTAKVRDLQTQLEELQKKYQQKLEQEENPGNDNVTIMELQTQLAQKTTLISDSKLKEQEFREQIHNLEDRLKKYEKNVYATTVGTPYKGGNLYHTDVSLFGEPTEFEYLRKVLFEYMMGRETKTMAKVITTVLKFPDDQTQKILEREDARLMFTSPRSGIF</sequence>
<evidence type="ECO:0000250" key="1">
    <source>
        <dbReference type="UniProtKB" id="Q91VW5"/>
    </source>
</evidence>
<evidence type="ECO:0000255" key="2"/>
<evidence type="ECO:0000255" key="3">
    <source>
        <dbReference type="PROSITE-ProRule" id="PRU00250"/>
    </source>
</evidence>
<evidence type="ECO:0000255" key="4">
    <source>
        <dbReference type="PROSITE-ProRule" id="PRU00498"/>
    </source>
</evidence>
<evidence type="ECO:0000256" key="5">
    <source>
        <dbReference type="SAM" id="MobiDB-lite"/>
    </source>
</evidence>
<evidence type="ECO:0000269" key="6">
    <source>
    </source>
</evidence>
<evidence type="ECO:0000269" key="7">
    <source>
    </source>
</evidence>
<evidence type="ECO:0000269" key="8">
    <source>
    </source>
</evidence>
<evidence type="ECO:0000269" key="9">
    <source>
    </source>
</evidence>
<evidence type="ECO:0000269" key="10">
    <source>
    </source>
</evidence>
<evidence type="ECO:0000269" key="11">
    <source>
    </source>
</evidence>
<evidence type="ECO:0000269" key="12">
    <source>
    </source>
</evidence>
<evidence type="ECO:0000303" key="13">
    <source ref="4"/>
</evidence>
<evidence type="ECO:0000305" key="14"/>
<evidence type="ECO:0007744" key="15">
    <source>
    </source>
</evidence>
<evidence type="ECO:0007744" key="16">
    <source>
    </source>
</evidence>
<evidence type="ECO:0007744" key="17">
    <source>
    </source>
</evidence>
<evidence type="ECO:0007744" key="18">
    <source>
    </source>
</evidence>
<evidence type="ECO:0007744" key="19">
    <source>
    </source>
</evidence>
<evidence type="ECO:0007744" key="20">
    <source>
    </source>
</evidence>
<evidence type="ECO:0007829" key="21">
    <source>
        <dbReference type="PDB" id="1UPT"/>
    </source>
</evidence>
<feature type="chain" id="PRO_0000190059" description="Golgin subfamily A member 4">
    <location>
        <begin position="1"/>
        <end position="2230"/>
    </location>
</feature>
<feature type="domain" description="GRIP" evidence="3">
    <location>
        <begin position="2168"/>
        <end position="2215"/>
    </location>
</feature>
<feature type="region of interest" description="Disordered" evidence="5">
    <location>
        <begin position="1"/>
        <end position="64"/>
    </location>
</feature>
<feature type="region of interest" description="Disordered" evidence="5">
    <location>
        <begin position="87"/>
        <end position="127"/>
    </location>
</feature>
<feature type="region of interest" description="Interaction with MACF1" evidence="11">
    <location>
        <begin position="133"/>
        <end position="203"/>
    </location>
</feature>
<feature type="coiled-coil region" evidence="2">
    <location>
        <begin position="133"/>
        <end position="2185"/>
    </location>
</feature>
<feature type="compositionally biased region" description="Low complexity" evidence="5">
    <location>
        <begin position="12"/>
        <end position="41"/>
    </location>
</feature>
<feature type="compositionally biased region" description="Basic and acidic residues" evidence="5">
    <location>
        <begin position="87"/>
        <end position="107"/>
    </location>
</feature>
<feature type="modified residue" description="Phosphoserine" evidence="19">
    <location>
        <position position="10"/>
    </location>
</feature>
<feature type="modified residue" description="Phosphothreonine" evidence="1">
    <location>
        <position position="39"/>
    </location>
</feature>
<feature type="modified residue" description="Phosphoserine" evidence="19">
    <location>
        <position position="41"/>
    </location>
</feature>
<feature type="modified residue" description="Phosphoserine" evidence="15 17 18 19">
    <location>
        <position position="71"/>
    </location>
</feature>
<feature type="modified residue" description="Phosphoserine" evidence="17 19">
    <location>
        <position position="78"/>
    </location>
</feature>
<feature type="modified residue" description="Phosphoserine" evidence="15">
    <location>
        <position position="89"/>
    </location>
</feature>
<feature type="modified residue" description="Phosphoserine" evidence="15 16 17 18 19 20">
    <location>
        <position position="266"/>
    </location>
</feature>
<feature type="modified residue" description="Phosphothreonine" evidence="15">
    <location>
        <position position="2223"/>
    </location>
</feature>
<feature type="glycosylation site" description="N-linked (GlcNAc...) asparagine" evidence="4">
    <location>
        <position position="585"/>
    </location>
</feature>
<feature type="glycosylation site" description="N-linked (GlcNAc...) asparagine" evidence="4">
    <location>
        <position position="1612"/>
    </location>
</feature>
<feature type="splice variant" id="VSP_044819" description="In isoform 5." evidence="13">
    <original>E</original>
    <variation>ENASTHASKSPDSVNGSEPSIPQ</variation>
    <location>
        <position position="54"/>
    </location>
</feature>
<feature type="splice variant" id="VSP_004274" description="In isoform 3 and isoform 5." evidence="13">
    <location>
        <begin position="2103"/>
        <end position="2109"/>
    </location>
</feature>
<feature type="splice variant" id="VSP_004275" description="In isoform 4 and isoform 5." evidence="13">
    <original>FTSPRSGIF</original>
    <variation>SWLRSSS</variation>
    <location>
        <begin position="2222"/>
        <end position="2230"/>
    </location>
</feature>
<feature type="sequence variant" id="VAR_033975" description="In dbSNP:rs11718848.">
    <original>Q</original>
    <variation>K</variation>
    <location>
        <position position="1028"/>
    </location>
</feature>
<feature type="sequence variant" id="VAR_033976" description="In dbSNP:rs9840779.">
    <original>N</original>
    <variation>S</variation>
    <location>
        <position position="1552"/>
    </location>
</feature>
<feature type="sequence variant" id="VAR_049258" description="In dbSNP:rs11924014.">
    <original>R</original>
    <variation>S</variation>
    <location>
        <position position="2058"/>
    </location>
</feature>
<feature type="mutagenesis site" description="Loss of TBC1D23-binding." evidence="12">
    <original>F</original>
    <variation>A</variation>
    <location>
        <position position="2"/>
    </location>
</feature>
<feature type="mutagenesis site" description="Loss of localization at the Golgi apparatus. Loss of ARL1-binding." evidence="6 7 8 10">
    <original>Y</original>
    <variation>A</variation>
    <location>
        <position position="2177"/>
    </location>
</feature>
<feature type="mutagenesis site" description="No effect on localization at the Golgi apparatus." evidence="7 10">
    <original>Y</original>
    <variation>F</variation>
    <location>
        <position position="2177"/>
    </location>
</feature>
<feature type="mutagenesis site" description="Abolishes Golgi localization." evidence="10">
    <original>V</original>
    <variation>A</variation>
    <location>
        <position position="2181"/>
    </location>
</feature>
<feature type="mutagenesis site" description="Abolishes Golgi localization." evidence="10">
    <original>F</original>
    <variation>A</variation>
    <location>
        <position position="2183"/>
    </location>
</feature>
<feature type="mutagenesis site" description="Loss of localization at the Golgi apparatus." evidence="7">
    <original>Y</original>
    <variation>A</variation>
    <location>
        <position position="2185"/>
    </location>
</feature>
<feature type="mutagenesis site" description="Abolishes Golgi localization." evidence="10">
    <original>M</original>
    <variation>A</variation>
    <location>
        <position position="2186"/>
    </location>
</feature>
<feature type="mutagenesis site" description="Abolishes Golgi localization." evidence="10">
    <original>T</original>
    <variation>A</variation>
    <location>
        <position position="2193"/>
    </location>
</feature>
<feature type="mutagenesis site" description="Abolishes Golgi localization." evidence="10">
    <original>M</original>
    <variation>A</variation>
    <location>
        <position position="2194"/>
    </location>
</feature>
<feature type="mutagenesis site" description="Abolishes Golgi localization." evidence="10">
    <original>V</original>
    <variation>A</variation>
    <location>
        <position position="2197"/>
    </location>
</feature>
<feature type="mutagenesis site" description="Abolishes Golgi localization." evidence="10">
    <original>I</original>
    <variation>A</variation>
    <location>
        <position position="2198"/>
    </location>
</feature>
<feature type="mutagenesis site" description="Abolishes Golgi localization." evidence="10">
    <original>L</original>
    <variation>A</variation>
    <location>
        <position position="2202"/>
    </location>
</feature>
<feature type="mutagenesis site" description="Abolishes Golgi localization." evidence="10">
    <original>F</original>
    <variation>A</variation>
    <location>
        <position position="2204"/>
    </location>
</feature>
<feature type="mutagenesis site" description="Abolishes Golgi localization." evidence="10">
    <original>I</original>
    <variation>A</variation>
    <location>
        <position position="2212"/>
    </location>
</feature>
<feature type="sequence conflict" description="In Ref. 5; AAC51791." evidence="14" ref="5">
    <original>R</original>
    <variation>K</variation>
    <location>
        <position position="188"/>
    </location>
</feature>
<feature type="sequence conflict" description="In Ref. 5; AAC51791." evidence="14" ref="5">
    <original>Y</original>
    <variation>H</variation>
    <location>
        <position position="220"/>
    </location>
</feature>
<feature type="sequence conflict" description="In Ref. 5; AAC51791." evidence="14" ref="5">
    <original>T</original>
    <variation>A</variation>
    <location>
        <position position="276"/>
    </location>
</feature>
<feature type="sequence conflict" description="In Ref. 5; AAC51791." evidence="14" ref="5">
    <original>K</original>
    <variation>E</variation>
    <location>
        <position position="584"/>
    </location>
</feature>
<feature type="sequence conflict" description="In Ref. 5; AAC51791." evidence="14" ref="5">
    <original>T</original>
    <variation>A</variation>
    <location>
        <position position="628"/>
    </location>
</feature>
<feature type="sequence conflict" description="In Ref. 5; AAC51791." evidence="14" ref="5">
    <original>K</original>
    <variation>E</variation>
    <location>
        <position position="630"/>
    </location>
</feature>
<feature type="sequence conflict" description="In Ref. 5; AAC51791." evidence="14" ref="5">
    <original>K</original>
    <variation>N</variation>
    <location>
        <position position="682"/>
    </location>
</feature>
<feature type="helix" evidence="21">
    <location>
        <begin position="2173"/>
        <end position="2186"/>
    </location>
</feature>
<feature type="helix" evidence="21">
    <location>
        <begin position="2191"/>
        <end position="2201"/>
    </location>
</feature>
<feature type="helix" evidence="21">
    <location>
        <begin position="2206"/>
        <end position="2221"/>
    </location>
</feature>
<proteinExistence type="evidence at protein level"/>
<gene>
    <name type="primary">GOLGA4</name>
</gene>
<dbReference type="EMBL" id="U41740">
    <property type="protein sequence ID" value="AAC50434.1"/>
    <property type="molecule type" value="mRNA"/>
</dbReference>
<dbReference type="EMBL" id="X82834">
    <property type="protein sequence ID" value="CAA58041.1"/>
    <property type="status" value="ALT_FRAME"/>
    <property type="molecule type" value="mRNA"/>
</dbReference>
<dbReference type="EMBL" id="AC097359">
    <property type="status" value="NOT_ANNOTATED_CDS"/>
    <property type="molecule type" value="Genomic_DNA"/>
</dbReference>
<dbReference type="EMBL" id="AB209693">
    <property type="protein sequence ID" value="BAD92930.1"/>
    <property type="status" value="ALT_INIT"/>
    <property type="molecule type" value="mRNA"/>
</dbReference>
<dbReference type="EMBL" id="U31906">
    <property type="protein sequence ID" value="AAC51791.1"/>
    <property type="molecule type" value="mRNA"/>
</dbReference>
<dbReference type="EMBL" id="X76942">
    <property type="protein sequence ID" value="CAA54261.1"/>
    <property type="molecule type" value="mRNA"/>
</dbReference>
<dbReference type="CCDS" id="CCDS2666.1">
    <molecule id="Q13439-1"/>
</dbReference>
<dbReference type="CCDS" id="CCDS54564.1">
    <molecule id="Q13439-5"/>
</dbReference>
<dbReference type="RefSeq" id="NP_001166184.1">
    <molecule id="Q13439-5"/>
    <property type="nucleotide sequence ID" value="NM_001172713.3"/>
</dbReference>
<dbReference type="RefSeq" id="NP_001416130.1">
    <molecule id="Q13439-4"/>
    <property type="nucleotide sequence ID" value="NM_001429201.1"/>
</dbReference>
<dbReference type="RefSeq" id="NP_002069.2">
    <molecule id="Q13439-1"/>
    <property type="nucleotide sequence ID" value="NM_002078.4"/>
</dbReference>
<dbReference type="PDB" id="1R4A">
    <property type="method" value="X-ray"/>
    <property type="resolution" value="2.30 A"/>
    <property type="chains" value="E/F/G/H=2172-2222"/>
</dbReference>
<dbReference type="PDB" id="1UPT">
    <property type="method" value="X-ray"/>
    <property type="resolution" value="1.70 A"/>
    <property type="chains" value="B/D/F/H=2170-2228"/>
</dbReference>
<dbReference type="PDBsum" id="1R4A"/>
<dbReference type="PDBsum" id="1UPT"/>
<dbReference type="SMR" id="Q13439"/>
<dbReference type="BioGRID" id="109065">
    <property type="interactions" value="238"/>
</dbReference>
<dbReference type="FunCoup" id="Q13439">
    <property type="interactions" value="2183"/>
</dbReference>
<dbReference type="IntAct" id="Q13439">
    <property type="interactions" value="72"/>
</dbReference>
<dbReference type="MINT" id="Q13439"/>
<dbReference type="STRING" id="9606.ENSP00000349305"/>
<dbReference type="GlyConnect" id="690">
    <property type="glycosylation" value="5 N-Linked glycans (2 sites)"/>
</dbReference>
<dbReference type="GlyCosmos" id="Q13439">
    <property type="glycosylation" value="2 sites, 10 glycans"/>
</dbReference>
<dbReference type="GlyGen" id="Q13439">
    <property type="glycosylation" value="3 sites, 10 N-linked glycans (2 sites), 1 O-linked glycan (1 site)"/>
</dbReference>
<dbReference type="iPTMnet" id="Q13439"/>
<dbReference type="MetOSite" id="Q13439"/>
<dbReference type="PhosphoSitePlus" id="Q13439"/>
<dbReference type="BioMuta" id="GOLGA4"/>
<dbReference type="DMDM" id="12643718"/>
<dbReference type="jPOST" id="Q13439"/>
<dbReference type="MassIVE" id="Q13439"/>
<dbReference type="PaxDb" id="9606-ENSP00000349305"/>
<dbReference type="PeptideAtlas" id="Q13439"/>
<dbReference type="ProteomicsDB" id="30188"/>
<dbReference type="ProteomicsDB" id="59436">
    <molecule id="Q13439-1"/>
</dbReference>
<dbReference type="ProteomicsDB" id="59437">
    <molecule id="Q13439-3"/>
</dbReference>
<dbReference type="ProteomicsDB" id="59438">
    <molecule id="Q13439-4"/>
</dbReference>
<dbReference type="Pumba" id="Q13439"/>
<dbReference type="Antibodypedia" id="28305">
    <property type="antibodies" value="99 antibodies from 23 providers"/>
</dbReference>
<dbReference type="DNASU" id="2803"/>
<dbReference type="Ensembl" id="ENST00000356847.8">
    <molecule id="Q13439-5"/>
    <property type="protein sequence ID" value="ENSP00000349305.4"/>
    <property type="gene ID" value="ENSG00000144674.19"/>
</dbReference>
<dbReference type="Ensembl" id="ENST00000361924.7">
    <molecule id="Q13439-1"/>
    <property type="protein sequence ID" value="ENSP00000354486.2"/>
    <property type="gene ID" value="ENSG00000144674.19"/>
</dbReference>
<dbReference type="GeneID" id="2803"/>
<dbReference type="KEGG" id="hsa:2803"/>
<dbReference type="MANE-Select" id="ENST00000361924.7">
    <property type="protein sequence ID" value="ENSP00000354486.2"/>
    <property type="RefSeq nucleotide sequence ID" value="NM_002078.5"/>
    <property type="RefSeq protein sequence ID" value="NP_002069.2"/>
</dbReference>
<dbReference type="UCSC" id="uc003cgv.4">
    <molecule id="Q13439-1"/>
    <property type="organism name" value="human"/>
</dbReference>
<dbReference type="AGR" id="HGNC:4427"/>
<dbReference type="CTD" id="2803"/>
<dbReference type="DisGeNET" id="2803"/>
<dbReference type="GeneCards" id="GOLGA4"/>
<dbReference type="HGNC" id="HGNC:4427">
    <property type="gene designation" value="GOLGA4"/>
</dbReference>
<dbReference type="HPA" id="ENSG00000144674">
    <property type="expression patterns" value="Low tissue specificity"/>
</dbReference>
<dbReference type="MIM" id="602509">
    <property type="type" value="gene"/>
</dbReference>
<dbReference type="neXtProt" id="NX_Q13439"/>
<dbReference type="OpenTargets" id="ENSG00000144674"/>
<dbReference type="PharmGKB" id="PA28808"/>
<dbReference type="VEuPathDB" id="HostDB:ENSG00000144674"/>
<dbReference type="eggNOG" id="ENOG502QTM0">
    <property type="taxonomic scope" value="Eukaryota"/>
</dbReference>
<dbReference type="GeneTree" id="ENSGT00730000111139"/>
<dbReference type="HOGENOM" id="CLU_001994_0_0_1"/>
<dbReference type="InParanoid" id="Q13439"/>
<dbReference type="OMA" id="DEFRNQG"/>
<dbReference type="OrthoDB" id="28818at2759"/>
<dbReference type="PAN-GO" id="Q13439">
    <property type="GO annotations" value="3 GO annotations based on evolutionary models"/>
</dbReference>
<dbReference type="PhylomeDB" id="Q13439"/>
<dbReference type="TreeFam" id="TF325082"/>
<dbReference type="PathwayCommons" id="Q13439"/>
<dbReference type="Reactome" id="R-HSA-6811440">
    <property type="pathway name" value="Retrograde transport at the Trans-Golgi-Network"/>
</dbReference>
<dbReference type="Reactome" id="R-HSA-9673768">
    <property type="pathway name" value="Signaling by membrane-tethered fusions of PDGFRA or PDGFRB"/>
</dbReference>
<dbReference type="SignaLink" id="Q13439"/>
<dbReference type="BioGRID-ORCS" id="2803">
    <property type="hits" value="14 hits in 1154 CRISPR screens"/>
</dbReference>
<dbReference type="CD-CODE" id="8C2F96ED">
    <property type="entry name" value="Centrosome"/>
</dbReference>
<dbReference type="CD-CODE" id="F3208D05">
    <property type="entry name" value="Golgin condensate"/>
</dbReference>
<dbReference type="ChiTaRS" id="GOLGA4">
    <property type="organism name" value="human"/>
</dbReference>
<dbReference type="EvolutionaryTrace" id="Q13439"/>
<dbReference type="GeneWiki" id="GOLGA4"/>
<dbReference type="GenomeRNAi" id="2803"/>
<dbReference type="Pharos" id="Q13439">
    <property type="development level" value="Tbio"/>
</dbReference>
<dbReference type="PRO" id="PR:Q13439"/>
<dbReference type="Proteomes" id="UP000005640">
    <property type="component" value="Chromosome 3"/>
</dbReference>
<dbReference type="RNAct" id="Q13439">
    <property type="molecule type" value="protein"/>
</dbReference>
<dbReference type="Bgee" id="ENSG00000144674">
    <property type="expression patterns" value="Expressed in gluteal muscle and 212 other cell types or tissues"/>
</dbReference>
<dbReference type="ExpressionAtlas" id="Q13439">
    <property type="expression patterns" value="baseline and differential"/>
</dbReference>
<dbReference type="GO" id="GO:0005737">
    <property type="term" value="C:cytoplasm"/>
    <property type="evidence" value="ECO:0000314"/>
    <property type="project" value="UniProtKB"/>
</dbReference>
<dbReference type="GO" id="GO:0005829">
    <property type="term" value="C:cytosol"/>
    <property type="evidence" value="ECO:0000304"/>
    <property type="project" value="Reactome"/>
</dbReference>
<dbReference type="GO" id="GO:0070062">
    <property type="term" value="C:extracellular exosome"/>
    <property type="evidence" value="ECO:0007005"/>
    <property type="project" value="UniProtKB"/>
</dbReference>
<dbReference type="GO" id="GO:0005794">
    <property type="term" value="C:Golgi apparatus"/>
    <property type="evidence" value="ECO:0000314"/>
    <property type="project" value="HPA"/>
</dbReference>
<dbReference type="GO" id="GO:0000139">
    <property type="term" value="C:Golgi membrane"/>
    <property type="evidence" value="ECO:0007669"/>
    <property type="project" value="UniProtKB-SubCell"/>
</dbReference>
<dbReference type="GO" id="GO:0005654">
    <property type="term" value="C:nucleoplasm"/>
    <property type="evidence" value="ECO:0000314"/>
    <property type="project" value="HPA"/>
</dbReference>
<dbReference type="GO" id="GO:0005886">
    <property type="term" value="C:plasma membrane"/>
    <property type="evidence" value="ECO:0000304"/>
    <property type="project" value="Reactome"/>
</dbReference>
<dbReference type="GO" id="GO:0005802">
    <property type="term" value="C:trans-Golgi network"/>
    <property type="evidence" value="ECO:0000304"/>
    <property type="project" value="ProtInc"/>
</dbReference>
<dbReference type="GO" id="GO:0051020">
    <property type="term" value="F:GTPase binding"/>
    <property type="evidence" value="ECO:0000353"/>
    <property type="project" value="UniProtKB"/>
</dbReference>
<dbReference type="GO" id="GO:0031267">
    <property type="term" value="F:small GTPase binding"/>
    <property type="evidence" value="ECO:0000318"/>
    <property type="project" value="GO_Central"/>
</dbReference>
<dbReference type="GO" id="GO:0043001">
    <property type="term" value="P:Golgi to plasma membrane protein transport"/>
    <property type="evidence" value="ECO:0000314"/>
    <property type="project" value="UniProtKB"/>
</dbReference>
<dbReference type="GO" id="GO:0048193">
    <property type="term" value="P:Golgi vesicle transport"/>
    <property type="evidence" value="ECO:0000318"/>
    <property type="project" value="GO_Central"/>
</dbReference>
<dbReference type="GO" id="GO:0045773">
    <property type="term" value="P:positive regulation of axon extension"/>
    <property type="evidence" value="ECO:0000314"/>
    <property type="project" value="UniProtKB"/>
</dbReference>
<dbReference type="GO" id="GO:0016192">
    <property type="term" value="P:vesicle-mediated transport"/>
    <property type="evidence" value="ECO:0000304"/>
    <property type="project" value="ProtInc"/>
</dbReference>
<dbReference type="Gene3D" id="1.10.287.1490">
    <property type="match status" value="1"/>
</dbReference>
<dbReference type="Gene3D" id="1.10.220.60">
    <property type="entry name" value="GRIP domain"/>
    <property type="match status" value="1"/>
</dbReference>
<dbReference type="InterPro" id="IPR000237">
    <property type="entry name" value="GRIP_dom"/>
</dbReference>
<dbReference type="PANTHER" id="PTHR19327">
    <property type="entry name" value="GOLGIN"/>
    <property type="match status" value="1"/>
</dbReference>
<dbReference type="PANTHER" id="PTHR19327:SF0">
    <property type="entry name" value="GOLGIN SUBFAMILY A MEMBER 4"/>
    <property type="match status" value="1"/>
</dbReference>
<dbReference type="Pfam" id="PF01465">
    <property type="entry name" value="GRIP"/>
    <property type="match status" value="1"/>
</dbReference>
<dbReference type="SMART" id="SM00755">
    <property type="entry name" value="Grip"/>
    <property type="match status" value="1"/>
</dbReference>
<dbReference type="SUPFAM" id="SSF101283">
    <property type="entry name" value="GRIP domain"/>
    <property type="match status" value="1"/>
</dbReference>
<dbReference type="PROSITE" id="PS50913">
    <property type="entry name" value="GRIP"/>
    <property type="match status" value="1"/>
</dbReference>
<organism>
    <name type="scientific">Homo sapiens</name>
    <name type="common">Human</name>
    <dbReference type="NCBI Taxonomy" id="9606"/>
    <lineage>
        <taxon>Eukaryota</taxon>
        <taxon>Metazoa</taxon>
        <taxon>Chordata</taxon>
        <taxon>Craniata</taxon>
        <taxon>Vertebrata</taxon>
        <taxon>Euteleostomi</taxon>
        <taxon>Mammalia</taxon>
        <taxon>Eutheria</taxon>
        <taxon>Euarchontoglires</taxon>
        <taxon>Primates</taxon>
        <taxon>Haplorrhini</taxon>
        <taxon>Catarrhini</taxon>
        <taxon>Hominidae</taxon>
        <taxon>Homo</taxon>
    </lineage>
</organism>
<protein>
    <recommendedName>
        <fullName>Golgin subfamily A member 4</fullName>
    </recommendedName>
    <alternativeName>
        <fullName>256 kDa golgin</fullName>
    </alternativeName>
    <alternativeName>
        <fullName>Golgin-245</fullName>
    </alternativeName>
    <alternativeName>
        <fullName>Protein 72.1</fullName>
    </alternativeName>
    <alternativeName>
        <fullName>Trans-Golgi p230</fullName>
    </alternativeName>
</protein>
<comment type="function">
    <text evidence="11 12">Involved in vesicular trafficking at the Golgi apparatus level. May play a role in delivery of transport vesicles containing GPI-linked proteins from the trans-Golgi network through its interaction with MACF1. Involved in endosome-to-Golgi trafficking (PubMed:29084197).</text>
</comment>
<comment type="subunit">
    <text evidence="6 8 9 10 11 12">Homodimer (PubMed:14718928). Interacts with RAB6A (PubMed:10209123). Interacts with GTP-bound ARL1 and ARL3 (PubMed:11303027, PubMed:14580338, PubMed:14718928). Interacts with MACF1 (PubMed:15265687). Directly interacts with TBC1D23 (PubMed:29084197). Interacts with FAM91A1; this interaction may be mediated by TBC1D23 (PubMed:29084197).</text>
</comment>
<comment type="interaction">
    <interactant intactId="EBI-1037845">
        <id>Q13439</id>
    </interactant>
    <interactant intactId="EBI-6125599">
        <id>Q96NW4</id>
        <label>ANKRD27</label>
    </interactant>
    <organismsDiffer>false</organismsDiffer>
    <experiments>2</experiments>
</comment>
<comment type="interaction">
    <interactant intactId="EBI-1037845">
        <id>Q13439</id>
    </interactant>
    <interactant intactId="EBI-1045313">
        <id>Q9NV70</id>
        <label>EXOC1</label>
    </interactant>
    <organismsDiffer>false</organismsDiffer>
    <experiments>3</experiments>
</comment>
<comment type="interaction">
    <interactant intactId="EBI-1037845">
        <id>Q13439</id>
    </interactant>
    <interactant intactId="EBI-2652871">
        <id>Q9UGP4</id>
        <label>LIMD1</label>
    </interactant>
    <organismsDiffer>false</organismsDiffer>
    <experiments>2</experiments>
</comment>
<comment type="subcellular location">
    <subcellularLocation>
        <location>Cytoplasm</location>
    </subcellularLocation>
    <subcellularLocation>
        <location evidence="6 7 8 10 11">Golgi apparatus membrane</location>
        <topology>Peripheral membrane protein</topology>
    </subcellularLocation>
    <subcellularLocation>
        <location evidence="12">Golgi apparatus</location>
        <location evidence="12">trans-Golgi network membrane</location>
    </subcellularLocation>
</comment>
<comment type="alternative products">
    <event type="alternative splicing"/>
    <isoform>
        <id>Q13439-1</id>
        <name>1</name>
        <sequence type="displayed"/>
    </isoform>
    <isoform>
        <id>Q13439-3</id>
        <name>3</name>
        <sequence type="described" ref="VSP_004274"/>
    </isoform>
    <isoform>
        <id>Q13439-4</id>
        <name>4</name>
        <sequence type="described" ref="VSP_004275"/>
    </isoform>
    <isoform>
        <id>Q13439-5</id>
        <name>5</name>
        <sequence type="described" ref="VSP_044819 VSP_004274 VSP_004275"/>
    </isoform>
    <text>Additional isoforms seem to exist.</text>
</comment>
<comment type="domain">
    <text>Extended rod-like protein with coiled-coil domains.</text>
</comment>
<comment type="miscellaneous">
    <text>Antibodies against GOLGA4 are present in sera from patients with Sjoegren syndrome. Sera from patients with Sjoegren syndrome often contain antibodies that react with normal components of the Golgi complex.</text>
</comment>
<comment type="sequence caution" evidence="14">
    <conflict type="erroneous initiation">
        <sequence resource="EMBL-CDS" id="BAD92930"/>
    </conflict>
    <text>Extended N-terminus.</text>
</comment>
<comment type="sequence caution" evidence="14">
    <conflict type="frameshift">
        <sequence resource="EMBL-CDS" id="CAA58041"/>
    </conflict>
</comment>
<reference key="1">
    <citation type="journal article" date="1996" name="J. Biol. Chem.">
        <title>Molecular characterization of trans-Golgi p230: a human peripheral membrane protein encoded by a gene on chromosome 6p12-22 contains extensive coiled-coil alpha-helical domains and a granin motif.</title>
        <authorList>
            <person name="Erlich R."/>
            <person name="Gleeson P.A."/>
            <person name="Campbell P."/>
            <person name="Dietzsch E."/>
            <person name="Toh B.-H."/>
        </authorList>
    </citation>
    <scope>NUCLEOTIDE SEQUENCE [MRNA] (ISOFORM 1)</scope>
    <scope>ALTERNATIVE SPLICING</scope>
</reference>
<reference key="2">
    <citation type="submission" date="1994-11" db="EMBL/GenBank/DDBJ databases">
        <authorList>
            <person name="Seelig H.P."/>
        </authorList>
    </citation>
    <scope>NUCLEOTIDE SEQUENCE [MRNA] (ISOFORM 1)</scope>
</reference>
<reference key="3">
    <citation type="journal article" date="2006" name="Nature">
        <title>The DNA sequence, annotation and analysis of human chromosome 3.</title>
        <authorList>
            <person name="Muzny D.M."/>
            <person name="Scherer S.E."/>
            <person name="Kaul R."/>
            <person name="Wang J."/>
            <person name="Yu J."/>
            <person name="Sudbrak R."/>
            <person name="Buhay C.J."/>
            <person name="Chen R."/>
            <person name="Cree A."/>
            <person name="Ding Y."/>
            <person name="Dugan-Rocha S."/>
            <person name="Gill R."/>
            <person name="Gunaratne P."/>
            <person name="Harris R.A."/>
            <person name="Hawes A.C."/>
            <person name="Hernandez J."/>
            <person name="Hodgson A.V."/>
            <person name="Hume J."/>
            <person name="Jackson A."/>
            <person name="Khan Z.M."/>
            <person name="Kovar-Smith C."/>
            <person name="Lewis L.R."/>
            <person name="Lozado R.J."/>
            <person name="Metzker M.L."/>
            <person name="Milosavljevic A."/>
            <person name="Miner G.R."/>
            <person name="Morgan M.B."/>
            <person name="Nazareth L.V."/>
            <person name="Scott G."/>
            <person name="Sodergren E."/>
            <person name="Song X.-Z."/>
            <person name="Steffen D."/>
            <person name="Wei S."/>
            <person name="Wheeler D.A."/>
            <person name="Wright M.W."/>
            <person name="Worley K.C."/>
            <person name="Yuan Y."/>
            <person name="Zhang Z."/>
            <person name="Adams C.Q."/>
            <person name="Ansari-Lari M.A."/>
            <person name="Ayele M."/>
            <person name="Brown M.J."/>
            <person name="Chen G."/>
            <person name="Chen Z."/>
            <person name="Clendenning J."/>
            <person name="Clerc-Blankenburg K.P."/>
            <person name="Chen R."/>
            <person name="Chen Z."/>
            <person name="Davis C."/>
            <person name="Delgado O."/>
            <person name="Dinh H.H."/>
            <person name="Dong W."/>
            <person name="Draper H."/>
            <person name="Ernst S."/>
            <person name="Fu G."/>
            <person name="Gonzalez-Garay M.L."/>
            <person name="Garcia D.K."/>
            <person name="Gillett W."/>
            <person name="Gu J."/>
            <person name="Hao B."/>
            <person name="Haugen E."/>
            <person name="Havlak P."/>
            <person name="He X."/>
            <person name="Hennig S."/>
            <person name="Hu S."/>
            <person name="Huang W."/>
            <person name="Jackson L.R."/>
            <person name="Jacob L.S."/>
            <person name="Kelly S.H."/>
            <person name="Kube M."/>
            <person name="Levy R."/>
            <person name="Li Z."/>
            <person name="Liu B."/>
            <person name="Liu J."/>
            <person name="Liu W."/>
            <person name="Lu J."/>
            <person name="Maheshwari M."/>
            <person name="Nguyen B.-V."/>
            <person name="Okwuonu G.O."/>
            <person name="Palmeiri A."/>
            <person name="Pasternak S."/>
            <person name="Perez L.M."/>
            <person name="Phelps K.A."/>
            <person name="Plopper F.J."/>
            <person name="Qiang B."/>
            <person name="Raymond C."/>
            <person name="Rodriguez R."/>
            <person name="Saenphimmachak C."/>
            <person name="Santibanez J."/>
            <person name="Shen H."/>
            <person name="Shen Y."/>
            <person name="Subramanian S."/>
            <person name="Tabor P.E."/>
            <person name="Verduzco D."/>
            <person name="Waldron L."/>
            <person name="Wang J."/>
            <person name="Wang J."/>
            <person name="Wang Q."/>
            <person name="Williams G.A."/>
            <person name="Wong G.K.-S."/>
            <person name="Yao Z."/>
            <person name="Zhang J."/>
            <person name="Zhang X."/>
            <person name="Zhao G."/>
            <person name="Zhou J."/>
            <person name="Zhou Y."/>
            <person name="Nelson D."/>
            <person name="Lehrach H."/>
            <person name="Reinhardt R."/>
            <person name="Naylor S.L."/>
            <person name="Yang H."/>
            <person name="Olson M."/>
            <person name="Weinstock G."/>
            <person name="Gibbs R.A."/>
        </authorList>
    </citation>
    <scope>NUCLEOTIDE SEQUENCE [LARGE SCALE GENOMIC DNA]</scope>
</reference>
<reference key="4">
    <citation type="submission" date="2005-03" db="EMBL/GenBank/DDBJ databases">
        <title>Homo sapiens protein coding cDNA.</title>
        <authorList>
            <person name="Totoki Y."/>
            <person name="Toyoda A."/>
            <person name="Takeda T."/>
            <person name="Sakaki Y."/>
            <person name="Tanaka A."/>
            <person name="Yokoyama S."/>
            <person name="Ohara O."/>
            <person name="Nagase T."/>
            <person name="Kikuno R.F."/>
        </authorList>
    </citation>
    <scope>NUCLEOTIDE SEQUENCE [LARGE SCALE MRNA] OF 1-1279 (ISOFORM 5)</scope>
    <source>
        <tissue>Brain</tissue>
    </source>
</reference>
<reference key="5">
    <citation type="journal article" date="1995" name="J. Biol. Chem.">
        <title>Molecular characterization of golgin-245, a novel Golgi complex protein containing a granin signature.</title>
        <authorList>
            <person name="Fritzler M.J."/>
            <person name="Lung C.-C."/>
            <person name="Hamel J.C."/>
            <person name="Griffith K.J."/>
            <person name="Chan E.K.L."/>
        </authorList>
    </citation>
    <scope>NUCLEOTIDE SEQUENCE [MRNA] OF 131-2230</scope>
    <source>
        <tissue>Placenta</tissue>
    </source>
</reference>
<reference key="6">
    <citation type="thesis" date="1994" institute="Instituto municipal de investigacion medica" country="Spain">
        <authorList>
            <person name="Balague C."/>
        </authorList>
    </citation>
    <scope>NUCLEOTIDE SEQUENCE [MRNA] OF 524-672</scope>
    <source>
        <tissue>Gastric fundus</tissue>
    </source>
</reference>
<reference key="7">
    <citation type="journal article" date="1999" name="Curr. Biol.">
        <title>A novel Rab6-interacting domain defines a family of Golgi-targeted coiled-coil proteins.</title>
        <authorList>
            <person name="Barr F.A."/>
        </authorList>
    </citation>
    <scope>INTERACTION WITH RAB6A</scope>
    <scope>SUBCELLULAR LOCATION</scope>
    <scope>MUTAGENESIS OF TYR-2177</scope>
</reference>
<reference key="8">
    <citation type="journal article" date="1999" name="Curr. Biol.">
        <title>A novel Golgi-localisation domain shared by a class of coiled-coil peripheral membrane proteins.</title>
        <authorList>
            <person name="Kjer-Nielsen L."/>
            <person name="Teasdale R.D."/>
            <person name="van Vliet C."/>
            <person name="Gleeson P.A."/>
        </authorList>
    </citation>
    <scope>SUBCELLULAR LOCATION</scope>
    <scope>MUTAGENESIS OF TYR-2177 AND TYR-2185</scope>
</reference>
<reference key="9">
    <citation type="journal article" date="2001" name="J. Biol. Chem.">
        <title>ADP-ribosylation factors (ARFs) and ARF-like 1 (ARL1) have both specific and shared effectors: characterizing ARL1-binding proteins.</title>
        <authorList>
            <person name="Van Valkenburgh H."/>
            <person name="Shern J.F."/>
            <person name="Sharer J.D."/>
            <person name="Zhu X."/>
            <person name="Kahn R.A."/>
        </authorList>
    </citation>
    <scope>INTERACTION WITH ARL1 AND ARL3</scope>
    <scope>SUBCELLULAR LOCATION</scope>
    <scope>MUTAGENESIS OF TYR-2177</scope>
</reference>
<reference key="10">
    <citation type="journal article" date="2004" name="Exp. Cell Res.">
        <title>Interaction between p230 and MACF1 is associated with transport of a glycosyl phosphatidyl inositol-anchored protein from the Golgi to the cell periphery.</title>
        <authorList>
            <person name="Kakinuma T."/>
            <person name="Ichikawa H."/>
            <person name="Tsukada Y."/>
            <person name="Nakamura T."/>
            <person name="Toh B.H."/>
        </authorList>
    </citation>
    <scope>FUNCTION</scope>
    <scope>SUBCELLULAR LOCATION</scope>
    <scope>INTERACTION WITH MACF1</scope>
</reference>
<reference key="11">
    <citation type="journal article" date="2008" name="Proc. Natl. Acad. Sci. U.S.A.">
        <title>A quantitative atlas of mitotic phosphorylation.</title>
        <authorList>
            <person name="Dephoure N."/>
            <person name="Zhou C."/>
            <person name="Villen J."/>
            <person name="Beausoleil S.A."/>
            <person name="Bakalarski C.E."/>
            <person name="Elledge S.J."/>
            <person name="Gygi S.P."/>
        </authorList>
    </citation>
    <scope>PHOSPHORYLATION [LARGE SCALE ANALYSIS] AT SER-71; SER-89; SER-266 AND THR-2223</scope>
    <scope>IDENTIFICATION BY MASS SPECTROMETRY [LARGE SCALE ANALYSIS]</scope>
    <source>
        <tissue>Cervix carcinoma</tissue>
    </source>
</reference>
<reference key="12">
    <citation type="journal article" date="2009" name="Anal. Chem.">
        <title>Lys-N and trypsin cover complementary parts of the phosphoproteome in a refined SCX-based approach.</title>
        <authorList>
            <person name="Gauci S."/>
            <person name="Helbig A.O."/>
            <person name="Slijper M."/>
            <person name="Krijgsveld J."/>
            <person name="Heck A.J."/>
            <person name="Mohammed S."/>
        </authorList>
    </citation>
    <scope>IDENTIFICATION BY MASS SPECTROMETRY [LARGE SCALE ANALYSIS]</scope>
</reference>
<reference key="13">
    <citation type="journal article" date="2009" name="Sci. Signal.">
        <title>Quantitative phosphoproteomic analysis of T cell receptor signaling reveals system-wide modulation of protein-protein interactions.</title>
        <authorList>
            <person name="Mayya V."/>
            <person name="Lundgren D.H."/>
            <person name="Hwang S.-I."/>
            <person name="Rezaul K."/>
            <person name="Wu L."/>
            <person name="Eng J.K."/>
            <person name="Rodionov V."/>
            <person name="Han D.K."/>
        </authorList>
    </citation>
    <scope>PHOSPHORYLATION [LARGE SCALE ANALYSIS] AT SER-266</scope>
    <scope>IDENTIFICATION BY MASS SPECTROMETRY [LARGE SCALE ANALYSIS]</scope>
    <source>
        <tissue>Leukemic T-cell</tissue>
    </source>
</reference>
<reference key="14">
    <citation type="journal article" date="2010" name="Sci. Signal.">
        <title>Quantitative phosphoproteomics reveals widespread full phosphorylation site occupancy during mitosis.</title>
        <authorList>
            <person name="Olsen J.V."/>
            <person name="Vermeulen M."/>
            <person name="Santamaria A."/>
            <person name="Kumar C."/>
            <person name="Miller M.L."/>
            <person name="Jensen L.J."/>
            <person name="Gnad F."/>
            <person name="Cox J."/>
            <person name="Jensen T.S."/>
            <person name="Nigg E.A."/>
            <person name="Brunak S."/>
            <person name="Mann M."/>
        </authorList>
    </citation>
    <scope>PHOSPHORYLATION [LARGE SCALE ANALYSIS] AT SER-71; SER-78 AND SER-266</scope>
    <scope>IDENTIFICATION BY MASS SPECTROMETRY [LARGE SCALE ANALYSIS]</scope>
    <source>
        <tissue>Cervix carcinoma</tissue>
    </source>
</reference>
<reference key="15">
    <citation type="journal article" date="2011" name="BMC Syst. Biol.">
        <title>Initial characterization of the human central proteome.</title>
        <authorList>
            <person name="Burkard T.R."/>
            <person name="Planyavsky M."/>
            <person name="Kaupe I."/>
            <person name="Breitwieser F.P."/>
            <person name="Buerckstuemmer T."/>
            <person name="Bennett K.L."/>
            <person name="Superti-Furga G."/>
            <person name="Colinge J."/>
        </authorList>
    </citation>
    <scope>IDENTIFICATION BY MASS SPECTROMETRY [LARGE SCALE ANALYSIS]</scope>
</reference>
<reference key="16">
    <citation type="journal article" date="2011" name="Sci. Signal.">
        <title>System-wide temporal characterization of the proteome and phosphoproteome of human embryonic stem cell differentiation.</title>
        <authorList>
            <person name="Rigbolt K.T."/>
            <person name="Prokhorova T.A."/>
            <person name="Akimov V."/>
            <person name="Henningsen J."/>
            <person name="Johansen P.T."/>
            <person name="Kratchmarova I."/>
            <person name="Kassem M."/>
            <person name="Mann M."/>
            <person name="Olsen J.V."/>
            <person name="Blagoev B."/>
        </authorList>
    </citation>
    <scope>PHOSPHORYLATION [LARGE SCALE ANALYSIS] AT SER-71 AND SER-266</scope>
    <scope>IDENTIFICATION BY MASS SPECTROMETRY [LARGE SCALE ANALYSIS]</scope>
</reference>
<reference key="17">
    <citation type="journal article" date="2013" name="J. Proteome Res.">
        <title>Toward a comprehensive characterization of a human cancer cell phosphoproteome.</title>
        <authorList>
            <person name="Zhou H."/>
            <person name="Di Palma S."/>
            <person name="Preisinger C."/>
            <person name="Peng M."/>
            <person name="Polat A.N."/>
            <person name="Heck A.J."/>
            <person name="Mohammed S."/>
        </authorList>
    </citation>
    <scope>PHOSPHORYLATION [LARGE SCALE ANALYSIS] AT SER-10; SER-41; SER-71; SER-78 AND SER-266</scope>
    <scope>IDENTIFICATION BY MASS SPECTROMETRY [LARGE SCALE ANALYSIS]</scope>
    <source>
        <tissue>Cervix carcinoma</tissue>
        <tissue>Erythroleukemia</tissue>
    </source>
</reference>
<reference key="18">
    <citation type="journal article" date="2014" name="J. Proteomics">
        <title>An enzyme assisted RP-RPLC approach for in-depth analysis of human liver phosphoproteome.</title>
        <authorList>
            <person name="Bian Y."/>
            <person name="Song C."/>
            <person name="Cheng K."/>
            <person name="Dong M."/>
            <person name="Wang F."/>
            <person name="Huang J."/>
            <person name="Sun D."/>
            <person name="Wang L."/>
            <person name="Ye M."/>
            <person name="Zou H."/>
        </authorList>
    </citation>
    <scope>PHOSPHORYLATION [LARGE SCALE ANALYSIS] AT SER-266</scope>
    <scope>IDENTIFICATION BY MASS SPECTROMETRY [LARGE SCALE ANALYSIS]</scope>
    <source>
        <tissue>Liver</tissue>
    </source>
</reference>
<reference key="19">
    <citation type="journal article" date="2017" name="Nat. Cell Biol.">
        <title>TBC1D23 is a bridging factor for endosomal vesicle capture by golgins at the trans-Golgi.</title>
        <authorList>
            <person name="Shin J.J.H."/>
            <person name="Gillingham A.K."/>
            <person name="Begum F."/>
            <person name="Chadwick J."/>
            <person name="Munro S."/>
        </authorList>
    </citation>
    <scope>FUNCTION</scope>
    <scope>INTERACTION WITH TBC1D23 AND FAM91A1</scope>
    <scope>SUBCELLULAR LOCATION</scope>
    <scope>MUTAGENESIS OF PHE-2</scope>
</reference>
<reference key="20">
    <citation type="journal article" date="2003" name="Mol. Cell">
        <title>Structural basis for Arl1-dependent targeting of homodimeric GRIP domains to the Golgi apparatus.</title>
        <authorList>
            <person name="Panic B."/>
            <person name="Perisic O."/>
            <person name="Veprintsev D.B."/>
            <person name="Williams R.L."/>
            <person name="Munro S."/>
        </authorList>
    </citation>
    <scope>X-RAY CRYSTALLOGRAPHY (1.7 ANGSTROMS) OF 2170-2221 IN COMPLEX WITH ARL1</scope>
</reference>
<reference key="21">
    <citation type="journal article" date="2004" name="Nat. Struct. Mol. Biol.">
        <title>Structural basis for recruitment of GRIP domain golgin-245 by small GTPase Arl1.</title>
        <authorList>
            <person name="Wu M."/>
            <person name="Lu L."/>
            <person name="Hong W."/>
            <person name="Song H."/>
        </authorList>
    </citation>
    <scope>X-RAY CRYSTALLOGRAPHY (2.3 ANGSTROMS) OF 2172-2222 IN COMPLEX WITH ARL1</scope>
    <scope>SUBCELLULAR LOCATION</scope>
    <scope>MUTAGENESIS OF VAL-2181; PHE-2183; MET-2186; THR-2193; MET-2194; VAL-2197; ILE-2198; LEU-2202; PHE-2204 AND ILE-2212</scope>
    <scope>HOMODIMERIZATION</scope>
</reference>